<dbReference type="EC" id="6.3.1.2" evidence="1"/>
<dbReference type="EMBL" id="AE001439">
    <property type="protein sequence ID" value="AAD06042.1"/>
    <property type="molecule type" value="Genomic_DNA"/>
</dbReference>
<dbReference type="PIR" id="B71929">
    <property type="entry name" value="B71929"/>
</dbReference>
<dbReference type="RefSeq" id="WP_000261520.1">
    <property type="nucleotide sequence ID" value="NC_000921.1"/>
</dbReference>
<dbReference type="SMR" id="Q9ZLW5"/>
<dbReference type="KEGG" id="hpj:jhp_0461"/>
<dbReference type="PATRIC" id="fig|85963.30.peg.541"/>
<dbReference type="eggNOG" id="COG0174">
    <property type="taxonomic scope" value="Bacteria"/>
</dbReference>
<dbReference type="Proteomes" id="UP000000804">
    <property type="component" value="Chromosome"/>
</dbReference>
<dbReference type="GO" id="GO:0005737">
    <property type="term" value="C:cytoplasm"/>
    <property type="evidence" value="ECO:0007669"/>
    <property type="project" value="UniProtKB-SubCell"/>
</dbReference>
<dbReference type="GO" id="GO:0016020">
    <property type="term" value="C:membrane"/>
    <property type="evidence" value="ECO:0007669"/>
    <property type="project" value="TreeGrafter"/>
</dbReference>
<dbReference type="GO" id="GO:0005524">
    <property type="term" value="F:ATP binding"/>
    <property type="evidence" value="ECO:0007669"/>
    <property type="project" value="UniProtKB-KW"/>
</dbReference>
<dbReference type="GO" id="GO:0004356">
    <property type="term" value="F:glutamine synthetase activity"/>
    <property type="evidence" value="ECO:0007669"/>
    <property type="project" value="UniProtKB-EC"/>
</dbReference>
<dbReference type="GO" id="GO:0046872">
    <property type="term" value="F:metal ion binding"/>
    <property type="evidence" value="ECO:0007669"/>
    <property type="project" value="UniProtKB-KW"/>
</dbReference>
<dbReference type="GO" id="GO:0006542">
    <property type="term" value="P:glutamine biosynthetic process"/>
    <property type="evidence" value="ECO:0007669"/>
    <property type="project" value="InterPro"/>
</dbReference>
<dbReference type="GO" id="GO:0019740">
    <property type="term" value="P:nitrogen utilization"/>
    <property type="evidence" value="ECO:0007669"/>
    <property type="project" value="TreeGrafter"/>
</dbReference>
<dbReference type="FunFam" id="3.30.590.10:FF:000001">
    <property type="entry name" value="Glutamine synthetase"/>
    <property type="match status" value="1"/>
</dbReference>
<dbReference type="FunFam" id="3.10.20.70:FF:000012">
    <property type="entry name" value="Glutamine synthetase, type I"/>
    <property type="match status" value="1"/>
</dbReference>
<dbReference type="Gene3D" id="3.10.20.70">
    <property type="entry name" value="Glutamine synthetase, N-terminal domain"/>
    <property type="match status" value="1"/>
</dbReference>
<dbReference type="Gene3D" id="3.30.590.10">
    <property type="entry name" value="Glutamine synthetase/guanido kinase, catalytic domain"/>
    <property type="match status" value="1"/>
</dbReference>
<dbReference type="InterPro" id="IPR008147">
    <property type="entry name" value="Gln_synt_N"/>
</dbReference>
<dbReference type="InterPro" id="IPR036651">
    <property type="entry name" value="Gln_synt_N_sf"/>
</dbReference>
<dbReference type="InterPro" id="IPR014746">
    <property type="entry name" value="Gln_synth/guanido_kin_cat_dom"/>
</dbReference>
<dbReference type="InterPro" id="IPR008146">
    <property type="entry name" value="Gln_synth_cat_dom"/>
</dbReference>
<dbReference type="InterPro" id="IPR027303">
    <property type="entry name" value="Gln_synth_gly_rich_site"/>
</dbReference>
<dbReference type="InterPro" id="IPR004809">
    <property type="entry name" value="Gln_synth_I"/>
</dbReference>
<dbReference type="NCBIfam" id="TIGR00653">
    <property type="entry name" value="GlnA"/>
    <property type="match status" value="1"/>
</dbReference>
<dbReference type="PANTHER" id="PTHR43407">
    <property type="entry name" value="GLUTAMINE SYNTHETASE"/>
    <property type="match status" value="1"/>
</dbReference>
<dbReference type="PANTHER" id="PTHR43407:SF1">
    <property type="entry name" value="LENGSIN"/>
    <property type="match status" value="1"/>
</dbReference>
<dbReference type="Pfam" id="PF00120">
    <property type="entry name" value="Gln-synt_C"/>
    <property type="match status" value="1"/>
</dbReference>
<dbReference type="Pfam" id="PF03951">
    <property type="entry name" value="Gln-synt_N"/>
    <property type="match status" value="1"/>
</dbReference>
<dbReference type="SMART" id="SM01230">
    <property type="entry name" value="Gln-synt_C"/>
    <property type="match status" value="1"/>
</dbReference>
<dbReference type="SUPFAM" id="SSF54368">
    <property type="entry name" value="Glutamine synthetase, N-terminal domain"/>
    <property type="match status" value="1"/>
</dbReference>
<dbReference type="SUPFAM" id="SSF55931">
    <property type="entry name" value="Glutamine synthetase/guanido kinase"/>
    <property type="match status" value="1"/>
</dbReference>
<dbReference type="PROSITE" id="PS00181">
    <property type="entry name" value="GLNA_ATP"/>
    <property type="match status" value="1"/>
</dbReference>
<dbReference type="PROSITE" id="PS51986">
    <property type="entry name" value="GS_BETA_GRASP"/>
    <property type="match status" value="1"/>
</dbReference>
<dbReference type="PROSITE" id="PS51987">
    <property type="entry name" value="GS_CATALYTIC"/>
    <property type="match status" value="1"/>
</dbReference>
<comment type="function">
    <text evidence="1">Catalyzes the ATP-dependent biosynthesis of glutamine from glutamate and ammonia.</text>
</comment>
<comment type="catalytic activity">
    <reaction evidence="1">
        <text>L-glutamate + NH4(+) + ATP = L-glutamine + ADP + phosphate + H(+)</text>
        <dbReference type="Rhea" id="RHEA:16169"/>
        <dbReference type="ChEBI" id="CHEBI:15378"/>
        <dbReference type="ChEBI" id="CHEBI:28938"/>
        <dbReference type="ChEBI" id="CHEBI:29985"/>
        <dbReference type="ChEBI" id="CHEBI:30616"/>
        <dbReference type="ChEBI" id="CHEBI:43474"/>
        <dbReference type="ChEBI" id="CHEBI:58359"/>
        <dbReference type="ChEBI" id="CHEBI:456216"/>
        <dbReference type="EC" id="6.3.1.2"/>
    </reaction>
</comment>
<comment type="cofactor">
    <cofactor evidence="4">
        <name>Mg(2+)</name>
        <dbReference type="ChEBI" id="CHEBI:18420"/>
    </cofactor>
    <text evidence="4">Binds 2 Mg(2+) ions per subunit.</text>
</comment>
<comment type="activity regulation">
    <text evidence="5">The activity of this enzyme could be controlled by adenylation under conditions of abundant glutamine.</text>
</comment>
<comment type="subunit">
    <text evidence="1">Oligomer of 12 subunits arranged in the form of two hexameric ring.</text>
</comment>
<comment type="subcellular location">
    <subcellularLocation>
        <location evidence="4">Cytoplasm</location>
    </subcellularLocation>
</comment>
<comment type="similarity">
    <text evidence="8">Belongs to the glutamine synthetase family.</text>
</comment>
<feature type="chain" id="PRO_0000153240" description="Glutamine synthetase">
    <location>
        <begin position="1"/>
        <end position="481"/>
    </location>
</feature>
<feature type="domain" description="GS beta-grasp" evidence="6">
    <location>
        <begin position="22"/>
        <end position="106"/>
    </location>
</feature>
<feature type="domain" description="GS catalytic" evidence="7">
    <location>
        <begin position="114"/>
        <end position="481"/>
    </location>
</feature>
<feature type="binding site" evidence="4">
    <location>
        <position position="139"/>
    </location>
    <ligand>
        <name>Mg(2+)</name>
        <dbReference type="ChEBI" id="CHEBI:18420"/>
        <label>1</label>
    </ligand>
</feature>
<feature type="binding site" evidence="4">
    <location>
        <position position="141"/>
    </location>
    <ligand>
        <name>Mg(2+)</name>
        <dbReference type="ChEBI" id="CHEBI:18420"/>
        <label>2</label>
    </ligand>
</feature>
<feature type="binding site" evidence="4">
    <location>
        <position position="223"/>
    </location>
    <ligand>
        <name>Mg(2+)</name>
        <dbReference type="ChEBI" id="CHEBI:18420"/>
        <label>2</label>
    </ligand>
</feature>
<feature type="binding site" evidence="4">
    <location>
        <position position="230"/>
    </location>
    <ligand>
        <name>Mg(2+)</name>
        <dbReference type="ChEBI" id="CHEBI:18420"/>
        <label>2</label>
    </ligand>
</feature>
<feature type="binding site" evidence="1">
    <location>
        <begin position="274"/>
        <end position="275"/>
    </location>
    <ligand>
        <name>L-glutamate</name>
        <dbReference type="ChEBI" id="CHEBI:29985"/>
    </ligand>
</feature>
<feature type="binding site" evidence="2">
    <location>
        <position position="275"/>
    </location>
    <ligand>
        <name>L-glutamate</name>
        <dbReference type="ChEBI" id="CHEBI:29985"/>
    </ligand>
</feature>
<feature type="binding site" evidence="4">
    <location>
        <position position="279"/>
    </location>
    <ligand>
        <name>Mg(2+)</name>
        <dbReference type="ChEBI" id="CHEBI:18420"/>
        <label>1</label>
    </ligand>
</feature>
<feature type="binding site" evidence="1">
    <location>
        <begin position="281"/>
        <end position="283"/>
    </location>
    <ligand>
        <name>ATP</name>
        <dbReference type="ChEBI" id="CHEBI:30616"/>
    </ligand>
</feature>
<feature type="binding site" evidence="3">
    <location>
        <position position="283"/>
    </location>
    <ligand>
        <name>ATP</name>
        <dbReference type="ChEBI" id="CHEBI:30616"/>
    </ligand>
</feature>
<feature type="binding site" evidence="1">
    <location>
        <position position="331"/>
    </location>
    <ligand>
        <name>L-glutamate</name>
        <dbReference type="ChEBI" id="CHEBI:29985"/>
    </ligand>
</feature>
<feature type="binding site" evidence="1">
    <location>
        <position position="337"/>
    </location>
    <ligand>
        <name>L-glutamate</name>
        <dbReference type="ChEBI" id="CHEBI:29985"/>
    </ligand>
</feature>
<feature type="binding site" evidence="4">
    <location>
        <position position="349"/>
    </location>
    <ligand>
        <name>ATP</name>
        <dbReference type="ChEBI" id="CHEBI:30616"/>
    </ligand>
</feature>
<feature type="binding site" evidence="4">
    <location>
        <position position="349"/>
    </location>
    <ligand>
        <name>L-glutamate</name>
        <dbReference type="ChEBI" id="CHEBI:29985"/>
    </ligand>
</feature>
<feature type="binding site" evidence="4">
    <location>
        <position position="354"/>
    </location>
    <ligand>
        <name>ATP</name>
        <dbReference type="ChEBI" id="CHEBI:30616"/>
    </ligand>
</feature>
<feature type="binding site" evidence="4">
    <location>
        <position position="367"/>
    </location>
    <ligand>
        <name>Mg(2+)</name>
        <dbReference type="ChEBI" id="CHEBI:18420"/>
        <label>1</label>
    </ligand>
</feature>
<feature type="binding site" evidence="1">
    <location>
        <position position="369"/>
    </location>
    <ligand>
        <name>L-glutamate</name>
        <dbReference type="ChEBI" id="CHEBI:29985"/>
    </ligand>
</feature>
<organism>
    <name type="scientific">Helicobacter pylori (strain J99 / ATCC 700824)</name>
    <name type="common">Campylobacter pylori J99</name>
    <dbReference type="NCBI Taxonomy" id="85963"/>
    <lineage>
        <taxon>Bacteria</taxon>
        <taxon>Pseudomonadati</taxon>
        <taxon>Campylobacterota</taxon>
        <taxon>Epsilonproteobacteria</taxon>
        <taxon>Campylobacterales</taxon>
        <taxon>Helicobacteraceae</taxon>
        <taxon>Helicobacter</taxon>
    </lineage>
</organism>
<sequence length="481" mass="54566">MVVRTQNSESKIKEFFEFCKENEVEFVDFRFSDIKGTWNHIAYSFGALTHDMFKEGIPFDASSFKGWQGIEHSDMILTPDLVRYFIDPFSADVSAVVFCDVYDVYKNQPYEKCPRSIAKKALKHLRDLGLGDVAYFGAENEFFIFDSIKIKDASNSQYYEVDSEEGEWNRDKSFENGVNFGHRPGKQGGYMPVPPTDTMMDIRTEIVKVLNQVGLETFVVHHEVAQAQGEVGVKFGDLVEAADNVQKLKYVVKMVAHLNGKTATFMPKPLYGDNGSGMHTHVSIWKNNENLFGGETYKGLSEFALYFLGGVLRHARGLAAFTNASTNSYKRLIPGYEAPSILTYSASNRSASVRIPYGISKNSARFEFRFPDSSSNPYLAFGAILMAGIDGIKNKMDPGEAMDINLFKLTLDEIREKGIKQMPHTLRRSLEEMLADKQYLKEGQVFSEEFIQAYQSLKFHSEVFPWESKPHPFEFITTYSC</sequence>
<accession>Q9ZLW5</accession>
<proteinExistence type="inferred from homology"/>
<protein>
    <recommendedName>
        <fullName evidence="1">Glutamine synthetase</fullName>
        <shortName evidence="1">GS</shortName>
        <ecNumber evidence="1">6.3.1.2</ecNumber>
    </recommendedName>
    <alternativeName>
        <fullName evidence="8">Glutamate--ammonia ligase</fullName>
    </alternativeName>
    <alternativeName>
        <fullName evidence="1">Glutamine synthetase I beta</fullName>
        <shortName evidence="1">GSI beta</shortName>
    </alternativeName>
</protein>
<keyword id="KW-0067">ATP-binding</keyword>
<keyword id="KW-0963">Cytoplasm</keyword>
<keyword id="KW-0436">Ligase</keyword>
<keyword id="KW-0460">Magnesium</keyword>
<keyword id="KW-0479">Metal-binding</keyword>
<keyword id="KW-0547">Nucleotide-binding</keyword>
<reference key="1">
    <citation type="journal article" date="1999" name="Nature">
        <title>Genomic sequence comparison of two unrelated isolates of the human gastric pathogen Helicobacter pylori.</title>
        <authorList>
            <person name="Alm R.A."/>
            <person name="Ling L.-S.L."/>
            <person name="Moir D.T."/>
            <person name="King B.L."/>
            <person name="Brown E.D."/>
            <person name="Doig P.C."/>
            <person name="Smith D.R."/>
            <person name="Noonan B."/>
            <person name="Guild B.C."/>
            <person name="deJonge B.L."/>
            <person name="Carmel G."/>
            <person name="Tummino P.J."/>
            <person name="Caruso A."/>
            <person name="Uria-Nickelsen M."/>
            <person name="Mills D.M."/>
            <person name="Ives C."/>
            <person name="Gibson R."/>
            <person name="Merberg D."/>
            <person name="Mills S.D."/>
            <person name="Jiang Q."/>
            <person name="Taylor D.E."/>
            <person name="Vovis G.F."/>
            <person name="Trust T.J."/>
        </authorList>
    </citation>
    <scope>NUCLEOTIDE SEQUENCE [LARGE SCALE GENOMIC DNA]</scope>
    <source>
        <strain>J99 / ATCC 700824</strain>
    </source>
</reference>
<evidence type="ECO:0000250" key="1">
    <source>
        <dbReference type="UniProtKB" id="P0A1P6"/>
    </source>
</evidence>
<evidence type="ECO:0000250" key="2">
    <source>
        <dbReference type="UniProtKB" id="P12425"/>
    </source>
</evidence>
<evidence type="ECO:0000250" key="3">
    <source>
        <dbReference type="UniProtKB" id="P77961"/>
    </source>
</evidence>
<evidence type="ECO:0000250" key="4">
    <source>
        <dbReference type="UniProtKB" id="P9WN39"/>
    </source>
</evidence>
<evidence type="ECO:0000250" key="5">
    <source>
        <dbReference type="UniProtKB" id="Q3V5W6"/>
    </source>
</evidence>
<evidence type="ECO:0000255" key="6">
    <source>
        <dbReference type="PROSITE-ProRule" id="PRU01330"/>
    </source>
</evidence>
<evidence type="ECO:0000255" key="7">
    <source>
        <dbReference type="PROSITE-ProRule" id="PRU01331"/>
    </source>
</evidence>
<evidence type="ECO:0000305" key="8"/>
<gene>
    <name evidence="1" type="primary">glnA</name>
    <name type="ordered locus">jhp_0461</name>
</gene>
<name>GLN1B_HELPJ</name>